<feature type="chain" id="PRO_1000057396" description="2-dehydro-3-deoxyphosphooctonate aldolase">
    <location>
        <begin position="1"/>
        <end position="281"/>
    </location>
</feature>
<comment type="catalytic activity">
    <reaction evidence="1">
        <text>D-arabinose 5-phosphate + phosphoenolpyruvate + H2O = 3-deoxy-alpha-D-manno-2-octulosonate-8-phosphate + phosphate</text>
        <dbReference type="Rhea" id="RHEA:14053"/>
        <dbReference type="ChEBI" id="CHEBI:15377"/>
        <dbReference type="ChEBI" id="CHEBI:43474"/>
        <dbReference type="ChEBI" id="CHEBI:57693"/>
        <dbReference type="ChEBI" id="CHEBI:58702"/>
        <dbReference type="ChEBI" id="CHEBI:85985"/>
        <dbReference type="EC" id="2.5.1.55"/>
    </reaction>
</comment>
<comment type="pathway">
    <text evidence="1">Carbohydrate biosynthesis; 3-deoxy-D-manno-octulosonate biosynthesis; 3-deoxy-D-manno-octulosonate from D-ribulose 5-phosphate: step 2/3.</text>
</comment>
<comment type="pathway">
    <text evidence="1">Bacterial outer membrane biogenesis; lipopolysaccharide biosynthesis.</text>
</comment>
<comment type="subcellular location">
    <subcellularLocation>
        <location evidence="1">Cytoplasm</location>
    </subcellularLocation>
</comment>
<comment type="similarity">
    <text evidence="1">Belongs to the KdsA family.</text>
</comment>
<protein>
    <recommendedName>
        <fullName evidence="1">2-dehydro-3-deoxyphosphooctonate aldolase</fullName>
        <ecNumber evidence="1">2.5.1.55</ecNumber>
    </recommendedName>
    <alternativeName>
        <fullName evidence="1">3-deoxy-D-manno-octulosonic acid 8-phosphate synthase</fullName>
    </alternativeName>
    <alternativeName>
        <fullName evidence="1">KDO-8-phosphate synthase</fullName>
        <shortName evidence="1">KDO 8-P synthase</shortName>
        <shortName evidence="1">KDOPS</shortName>
    </alternativeName>
    <alternativeName>
        <fullName evidence="1">Phospho-2-dehydro-3-deoxyoctonate aldolase</fullName>
    </alternativeName>
</protein>
<organism>
    <name type="scientific">Pseudomonas paraeruginosa (strain DSM 24068 / PA7)</name>
    <name type="common">Pseudomonas aeruginosa (strain PA7)</name>
    <dbReference type="NCBI Taxonomy" id="381754"/>
    <lineage>
        <taxon>Bacteria</taxon>
        <taxon>Pseudomonadati</taxon>
        <taxon>Pseudomonadota</taxon>
        <taxon>Gammaproteobacteria</taxon>
        <taxon>Pseudomonadales</taxon>
        <taxon>Pseudomonadaceae</taxon>
        <taxon>Pseudomonas</taxon>
        <taxon>Pseudomonas paraeruginosa</taxon>
    </lineage>
</organism>
<keyword id="KW-0963">Cytoplasm</keyword>
<keyword id="KW-0448">Lipopolysaccharide biosynthesis</keyword>
<keyword id="KW-0808">Transferase</keyword>
<evidence type="ECO:0000255" key="1">
    <source>
        <dbReference type="HAMAP-Rule" id="MF_00056"/>
    </source>
</evidence>
<gene>
    <name evidence="1" type="primary">kdsA</name>
    <name type="ordered locus">PSPA7_1503</name>
</gene>
<sequence length="281" mass="31133">MAQKIVRVGDIQIGNDLPFVLFGGMNVLESRDLAMQVCEEYVRVTEKLGIPYVFKASFDKANRSSIHSFRGPGLEEGMKIFEEIKKTFKVPVITDVHEPHQAQPVAEVCDIIQLPAFLSRQTDLVVAMARTNAVINIKKAQFLAPQEMKHILTKCEEAGNDRLILCERGSSFGYNNLVVDMLGFGIMKQFEYPVFFDVTHALQMPGGRADSAGGRRAQVTDLAKAGLSQKLAGLFLEAHPDPEHAKCDGPCALRLNKLEAFLSQLKQLDELIKSFPAIETA</sequence>
<proteinExistence type="inferred from homology"/>
<reference key="1">
    <citation type="submission" date="2007-06" db="EMBL/GenBank/DDBJ databases">
        <authorList>
            <person name="Dodson R.J."/>
            <person name="Harkins D."/>
            <person name="Paulsen I.T."/>
        </authorList>
    </citation>
    <scope>NUCLEOTIDE SEQUENCE [LARGE SCALE GENOMIC DNA]</scope>
    <source>
        <strain>DSM 24068 / PA7</strain>
    </source>
</reference>
<accession>A6V1F2</accession>
<name>KDSA_PSEP7</name>
<dbReference type="EC" id="2.5.1.55" evidence="1"/>
<dbReference type="EMBL" id="CP000744">
    <property type="protein sequence ID" value="ABR85292.1"/>
    <property type="molecule type" value="Genomic_DNA"/>
</dbReference>
<dbReference type="RefSeq" id="WP_012074700.1">
    <property type="nucleotide sequence ID" value="NC_009656.1"/>
</dbReference>
<dbReference type="SMR" id="A6V1F2"/>
<dbReference type="GeneID" id="77219883"/>
<dbReference type="KEGG" id="pap:PSPA7_1503"/>
<dbReference type="HOGENOM" id="CLU_036666_0_0_6"/>
<dbReference type="UniPathway" id="UPA00030"/>
<dbReference type="UniPathway" id="UPA00357">
    <property type="reaction ID" value="UER00474"/>
</dbReference>
<dbReference type="Proteomes" id="UP000001582">
    <property type="component" value="Chromosome"/>
</dbReference>
<dbReference type="GO" id="GO:0005737">
    <property type="term" value="C:cytoplasm"/>
    <property type="evidence" value="ECO:0007669"/>
    <property type="project" value="UniProtKB-SubCell"/>
</dbReference>
<dbReference type="GO" id="GO:0008676">
    <property type="term" value="F:3-deoxy-8-phosphooctulonate synthase activity"/>
    <property type="evidence" value="ECO:0007669"/>
    <property type="project" value="UniProtKB-UniRule"/>
</dbReference>
<dbReference type="GO" id="GO:0019294">
    <property type="term" value="P:keto-3-deoxy-D-manno-octulosonic acid biosynthetic process"/>
    <property type="evidence" value="ECO:0007669"/>
    <property type="project" value="UniProtKB-UniRule"/>
</dbReference>
<dbReference type="FunFam" id="3.20.20.70:FF:000058">
    <property type="entry name" value="2-dehydro-3-deoxyphosphooctonate aldolase"/>
    <property type="match status" value="1"/>
</dbReference>
<dbReference type="Gene3D" id="3.20.20.70">
    <property type="entry name" value="Aldolase class I"/>
    <property type="match status" value="1"/>
</dbReference>
<dbReference type="HAMAP" id="MF_00056">
    <property type="entry name" value="KDO8P_synth"/>
    <property type="match status" value="1"/>
</dbReference>
<dbReference type="InterPro" id="IPR013785">
    <property type="entry name" value="Aldolase_TIM"/>
</dbReference>
<dbReference type="InterPro" id="IPR006218">
    <property type="entry name" value="DAHP1/KDSA"/>
</dbReference>
<dbReference type="InterPro" id="IPR006269">
    <property type="entry name" value="KDO8P_synthase"/>
</dbReference>
<dbReference type="NCBIfam" id="TIGR01362">
    <property type="entry name" value="KDO8P_synth"/>
    <property type="match status" value="1"/>
</dbReference>
<dbReference type="NCBIfam" id="NF003543">
    <property type="entry name" value="PRK05198.1"/>
    <property type="match status" value="1"/>
</dbReference>
<dbReference type="NCBIfam" id="NF009109">
    <property type="entry name" value="PRK12457.1"/>
    <property type="match status" value="1"/>
</dbReference>
<dbReference type="PANTHER" id="PTHR21057">
    <property type="entry name" value="PHOSPHO-2-DEHYDRO-3-DEOXYHEPTONATE ALDOLASE"/>
    <property type="match status" value="1"/>
</dbReference>
<dbReference type="Pfam" id="PF00793">
    <property type="entry name" value="DAHP_synth_1"/>
    <property type="match status" value="1"/>
</dbReference>
<dbReference type="SUPFAM" id="SSF51569">
    <property type="entry name" value="Aldolase"/>
    <property type="match status" value="1"/>
</dbReference>